<accession>P9WNE5</accession>
<accession>L0TGW6</accession>
<accession>P96237</accession>
<accession>Q7BS08</accession>
<accession>Q7D4R7</accession>
<evidence type="ECO:0000255" key="1">
    <source>
        <dbReference type="PROSITE-ProRule" id="PRU00085"/>
    </source>
</evidence>
<evidence type="ECO:0000269" key="2">
    <source>
    </source>
</evidence>
<evidence type="ECO:0000269" key="3">
    <source>
    </source>
</evidence>
<evidence type="ECO:0000269" key="4">
    <source>
    </source>
</evidence>
<evidence type="ECO:0000269" key="5">
    <source>
    </source>
</evidence>
<evidence type="ECO:0000269" key="6">
    <source>
    </source>
</evidence>
<evidence type="ECO:0000269" key="7">
    <source>
    </source>
</evidence>
<evidence type="ECO:0000269" key="8">
    <source>
    </source>
</evidence>
<evidence type="ECO:0000269" key="9">
    <source>
    </source>
</evidence>
<evidence type="ECO:0000269" key="10">
    <source>
    </source>
</evidence>
<evidence type="ECO:0000269" key="11">
    <source ref="12"/>
</evidence>
<evidence type="ECO:0000303" key="12">
    <source>
    </source>
</evidence>
<evidence type="ECO:0000303" key="13">
    <source>
    </source>
</evidence>
<evidence type="ECO:0000305" key="14"/>
<evidence type="ECO:0000305" key="15">
    <source>
    </source>
</evidence>
<evidence type="ECO:0000305" key="16">
    <source>
    </source>
</evidence>
<evidence type="ECO:0007744" key="17">
    <source>
        <dbReference type="PDB" id="3QD8"/>
    </source>
</evidence>
<evidence type="ECO:0007744" key="18">
    <source>
        <dbReference type="PDB" id="3UNO"/>
    </source>
</evidence>
<evidence type="ECO:0007744" key="19">
    <source>
        <dbReference type="PDB" id="7O6E"/>
    </source>
</evidence>
<evidence type="ECO:0007829" key="20">
    <source>
        <dbReference type="PDB" id="7O6E"/>
    </source>
</evidence>
<keyword id="KW-0002">3D-structure</keyword>
<keyword id="KW-0903">Direct protein sequencing</keyword>
<keyword id="KW-1284">Encapsulin nanocompartment</keyword>
<keyword id="KW-0408">Iron</keyword>
<keyword id="KW-0409">Iron storage</keyword>
<keyword id="KW-0479">Metal-binding</keyword>
<keyword id="KW-0560">Oxidoreductase</keyword>
<keyword id="KW-1185">Reference proteome</keyword>
<keyword id="KW-0843">Virulence</keyword>
<gene>
    <name evidence="13" type="primary">bfrB</name>
    <name type="synonym">ftn</name>
    <name type="ordered locus">Rv3841</name>
</gene>
<organism>
    <name type="scientific">Mycobacterium tuberculosis (strain ATCC 25618 / H37Rv)</name>
    <dbReference type="NCBI Taxonomy" id="83332"/>
    <lineage>
        <taxon>Bacteria</taxon>
        <taxon>Bacillati</taxon>
        <taxon>Actinomycetota</taxon>
        <taxon>Actinomycetes</taxon>
        <taxon>Mycobacteriales</taxon>
        <taxon>Mycobacteriaceae</taxon>
        <taxon>Mycobacterium</taxon>
        <taxon>Mycobacterium tuberculosis complex</taxon>
    </lineage>
</organism>
<sequence>MTEYEGPKTKFHALMQEQIHNEFTAAQQYVAIAVYFDSEDLPQLAKHFYSQAVEERNHAMMLVQHLLDRDLRVEIPGVDTVRNQFDRPREALALALDQERTVTDQVGRLTAVARDEGDFLGEQFMQWFLQEQIEEVALMATLVRVADRAGANLFELENFVAREVDVAPAASGAPHAAGGRL</sequence>
<dbReference type="EC" id="1.16.3.1" evidence="6 11"/>
<dbReference type="EMBL" id="AF102693">
    <property type="protein sequence ID" value="AAF06357.1"/>
    <property type="molecule type" value="Genomic_DNA"/>
</dbReference>
<dbReference type="EMBL" id="AL123456">
    <property type="protein sequence ID" value="CCP46670.1"/>
    <property type="molecule type" value="Genomic_DNA"/>
</dbReference>
<dbReference type="PIR" id="F70653">
    <property type="entry name" value="F70653"/>
</dbReference>
<dbReference type="RefSeq" id="NP_218358.1">
    <property type="nucleotide sequence ID" value="NC_000962.3"/>
</dbReference>
<dbReference type="RefSeq" id="WP_003420920.1">
    <property type="nucleotide sequence ID" value="NZ_NVQJ01000022.1"/>
</dbReference>
<dbReference type="PDB" id="3QD8">
    <property type="method" value="X-ray"/>
    <property type="resolution" value="3.00 A"/>
    <property type="chains" value="A/B/C/D/E/F/G/H/I/J/K/L/M/N/O/P/Q/R/S/T/U/V/W/X=1-181"/>
</dbReference>
<dbReference type="PDB" id="3UNO">
    <property type="method" value="X-ray"/>
    <property type="resolution" value="2.50 A"/>
    <property type="chains" value="A/B/C/D/E/F/G/H/I/J/K/L/M/N/O/P/Q/R/S/T/U/V/W/X=1-181"/>
</dbReference>
<dbReference type="PDB" id="7O6E">
    <property type="method" value="EM"/>
    <property type="resolution" value="2.10 A"/>
    <property type="chains" value="A/B/C/D/E/F/G/H/I/J/K/L/M/N/O/P/Q/R/S/T/V/W/X/Y=1-181"/>
</dbReference>
<dbReference type="PDB" id="8AEY">
    <property type="method" value="EM"/>
    <property type="resolution" value="3.05 A"/>
    <property type="chains" value="A/B/C/D/E/F/G/H/I/J/K/L/M/N/O/P/Q/R/S/T/V/W/X/Y=1-181"/>
</dbReference>
<dbReference type="PDBsum" id="3QD8"/>
<dbReference type="PDBsum" id="3UNO"/>
<dbReference type="PDBsum" id="7O6E"/>
<dbReference type="PDBsum" id="8AEY"/>
<dbReference type="EMDB" id="EMD-12738"/>
<dbReference type="EMDB" id="EMD-15389"/>
<dbReference type="EMDB" id="EMD-18010"/>
<dbReference type="EMDB" id="EMD-18028"/>
<dbReference type="EMDB" id="EMD-18029"/>
<dbReference type="EMDB" id="EMD-18030"/>
<dbReference type="SMR" id="P9WNE5"/>
<dbReference type="FunCoup" id="P9WNE5">
    <property type="interactions" value="64"/>
</dbReference>
<dbReference type="STRING" id="83332.Rv3841"/>
<dbReference type="PaxDb" id="83332-Rv3841"/>
<dbReference type="DNASU" id="886176"/>
<dbReference type="GeneID" id="45427842"/>
<dbReference type="GeneID" id="886176"/>
<dbReference type="KEGG" id="mtu:Rv3841"/>
<dbReference type="KEGG" id="mtv:RVBD_3841"/>
<dbReference type="TubercuList" id="Rv3841"/>
<dbReference type="eggNOG" id="COG1528">
    <property type="taxonomic scope" value="Bacteria"/>
</dbReference>
<dbReference type="InParanoid" id="P9WNE5"/>
<dbReference type="OrthoDB" id="9801481at2"/>
<dbReference type="PhylomeDB" id="P9WNE5"/>
<dbReference type="Reactome" id="R-HSA-1222449">
    <property type="pathway name" value="Mtb iron assimilation by chelation"/>
</dbReference>
<dbReference type="EvolutionaryTrace" id="P9WNE5"/>
<dbReference type="Proteomes" id="UP000001584">
    <property type="component" value="Chromosome"/>
</dbReference>
<dbReference type="GO" id="GO:0005737">
    <property type="term" value="C:cytoplasm"/>
    <property type="evidence" value="ECO:0000318"/>
    <property type="project" value="GO_Central"/>
</dbReference>
<dbReference type="GO" id="GO:0005829">
    <property type="term" value="C:cytosol"/>
    <property type="evidence" value="ECO:0007005"/>
    <property type="project" value="MTBBASE"/>
</dbReference>
<dbReference type="GO" id="GO:0140737">
    <property type="term" value="C:encapsulin nanocompartment"/>
    <property type="evidence" value="ECO:0007669"/>
    <property type="project" value="UniProtKB-SubCell"/>
</dbReference>
<dbReference type="GO" id="GO:0005576">
    <property type="term" value="C:extracellular region"/>
    <property type="evidence" value="ECO:0007005"/>
    <property type="project" value="MTBBASE"/>
</dbReference>
<dbReference type="GO" id="GO:0009274">
    <property type="term" value="C:peptidoglycan-based cell wall"/>
    <property type="evidence" value="ECO:0007005"/>
    <property type="project" value="MTBBASE"/>
</dbReference>
<dbReference type="GO" id="GO:0005886">
    <property type="term" value="C:plasma membrane"/>
    <property type="evidence" value="ECO:0007005"/>
    <property type="project" value="MTBBASE"/>
</dbReference>
<dbReference type="GO" id="GO:0008199">
    <property type="term" value="F:ferric iron binding"/>
    <property type="evidence" value="ECO:0000318"/>
    <property type="project" value="GO_Central"/>
</dbReference>
<dbReference type="GO" id="GO:0008198">
    <property type="term" value="F:ferrous iron binding"/>
    <property type="evidence" value="ECO:0000318"/>
    <property type="project" value="GO_Central"/>
</dbReference>
<dbReference type="GO" id="GO:0004322">
    <property type="term" value="F:ferroxidase activity"/>
    <property type="evidence" value="ECO:0000314"/>
    <property type="project" value="MTBBASE"/>
</dbReference>
<dbReference type="GO" id="GO:0140315">
    <property type="term" value="F:iron ion sequestering activity"/>
    <property type="evidence" value="ECO:0000314"/>
    <property type="project" value="MTBBASE"/>
</dbReference>
<dbReference type="GO" id="GO:0006879">
    <property type="term" value="P:intracellular iron ion homeostasis"/>
    <property type="evidence" value="ECO:0007669"/>
    <property type="project" value="UniProtKB-KW"/>
</dbReference>
<dbReference type="GO" id="GO:0006826">
    <property type="term" value="P:iron ion transport"/>
    <property type="evidence" value="ECO:0007669"/>
    <property type="project" value="InterPro"/>
</dbReference>
<dbReference type="GO" id="GO:0001666">
    <property type="term" value="P:response to hypoxia"/>
    <property type="evidence" value="ECO:0000314"/>
    <property type="project" value="MTBBASE"/>
</dbReference>
<dbReference type="GO" id="GO:0051409">
    <property type="term" value="P:response to nitrosative stress"/>
    <property type="evidence" value="ECO:0000270"/>
    <property type="project" value="MTBBASE"/>
</dbReference>
<dbReference type="CDD" id="cd01055">
    <property type="entry name" value="Nonheme_Ferritin"/>
    <property type="match status" value="1"/>
</dbReference>
<dbReference type="FunFam" id="1.20.1260.10:FF:000021">
    <property type="entry name" value="Ferritin BfrB"/>
    <property type="match status" value="1"/>
</dbReference>
<dbReference type="Gene3D" id="1.20.1260.10">
    <property type="match status" value="1"/>
</dbReference>
<dbReference type="InterPro" id="IPR001519">
    <property type="entry name" value="Ferritin"/>
</dbReference>
<dbReference type="InterPro" id="IPR012347">
    <property type="entry name" value="Ferritin-like"/>
</dbReference>
<dbReference type="InterPro" id="IPR009040">
    <property type="entry name" value="Ferritin-like_diiron"/>
</dbReference>
<dbReference type="InterPro" id="IPR009078">
    <property type="entry name" value="Ferritin-like_SF"/>
</dbReference>
<dbReference type="InterPro" id="IPR008331">
    <property type="entry name" value="Ferritin_DPS_dom"/>
</dbReference>
<dbReference type="InterPro" id="IPR041719">
    <property type="entry name" value="Ferritin_prok"/>
</dbReference>
<dbReference type="PANTHER" id="PTHR11431:SF127">
    <property type="entry name" value="BACTERIAL NON-HEME FERRITIN"/>
    <property type="match status" value="1"/>
</dbReference>
<dbReference type="PANTHER" id="PTHR11431">
    <property type="entry name" value="FERRITIN"/>
    <property type="match status" value="1"/>
</dbReference>
<dbReference type="Pfam" id="PF00210">
    <property type="entry name" value="Ferritin"/>
    <property type="match status" value="1"/>
</dbReference>
<dbReference type="SUPFAM" id="SSF47240">
    <property type="entry name" value="Ferritin-like"/>
    <property type="match status" value="1"/>
</dbReference>
<dbReference type="PROSITE" id="PS50905">
    <property type="entry name" value="FERRITIN_LIKE"/>
    <property type="match status" value="1"/>
</dbReference>
<reference key="1">
    <citation type="journal article" date="1998" name="Nature">
        <title>Deciphering the biology of Mycobacterium tuberculosis from the complete genome sequence.</title>
        <authorList>
            <person name="Cole S.T."/>
            <person name="Brosch R."/>
            <person name="Parkhill J."/>
            <person name="Garnier T."/>
            <person name="Churcher C.M."/>
            <person name="Harris D.E."/>
            <person name="Gordon S.V."/>
            <person name="Eiglmeier K."/>
            <person name="Gas S."/>
            <person name="Barry C.E. III"/>
            <person name="Tekaia F."/>
            <person name="Badcock K."/>
            <person name="Basham D."/>
            <person name="Brown D."/>
            <person name="Chillingworth T."/>
            <person name="Connor R."/>
            <person name="Davies R.M."/>
            <person name="Devlin K."/>
            <person name="Feltwell T."/>
            <person name="Gentles S."/>
            <person name="Hamlin N."/>
            <person name="Holroyd S."/>
            <person name="Hornsby T."/>
            <person name="Jagels K."/>
            <person name="Krogh A."/>
            <person name="McLean J."/>
            <person name="Moule S."/>
            <person name="Murphy L.D."/>
            <person name="Oliver S."/>
            <person name="Osborne J."/>
            <person name="Quail M.A."/>
            <person name="Rajandream M.A."/>
            <person name="Rogers J."/>
            <person name="Rutter S."/>
            <person name="Seeger K."/>
            <person name="Skelton S."/>
            <person name="Squares S."/>
            <person name="Squares R."/>
            <person name="Sulston J.E."/>
            <person name="Taylor K."/>
            <person name="Whitehead S."/>
            <person name="Barrell B.G."/>
        </authorList>
    </citation>
    <scope>NUCLEOTIDE SEQUENCE [LARGE SCALE GENOMIC DNA]</scope>
    <source>
        <strain>ATCC 25618 / H37Rv</strain>
    </source>
</reference>
<reference key="2">
    <citation type="journal article" date="1999" name="Infect. Immun.">
        <title>Response to reactive nitrogen intermediates in Mycobacterium tuberculosis: induction of the 16-kilodalton alpha-crystallin homolog by exposure to nitric oxide donors.</title>
        <authorList>
            <person name="Garbe T.R."/>
            <person name="Hibler N.S."/>
            <person name="Deretic V."/>
        </authorList>
    </citation>
    <scope>NUCLEOTIDE SEQUENCE [GENOMIC DNA]</scope>
    <scope>PROTEIN SEQUENCE OF 2-17</scope>
    <scope>INDUCTION BY NITRIC OXIDE STRESS</scope>
    <source>
        <strain>ATCC 25618 / H37Rv</strain>
    </source>
</reference>
<reference key="3">
    <citation type="journal article" date="2001" name="Proc. Natl. Acad. Sci. U.S.A.">
        <title>Regulation of the Mycobacterium tuberculosis hypoxic response gene encoding alpha -crystallin.</title>
        <authorList>
            <person name="Sherman D.R."/>
            <person name="Voskuil M."/>
            <person name="Schnappinger D."/>
            <person name="Liao R."/>
            <person name="Harrell M.I."/>
            <person name="Schoolnik G.K."/>
        </authorList>
    </citation>
    <scope>INDUCTION BY HYPOXIA</scope>
    <source>
        <strain>ATCC 25618 / H37Rv</strain>
    </source>
</reference>
<reference key="4">
    <citation type="journal article" date="2002" name="J. Bacteriol.">
        <title>Hypoxic response of Mycobacterium tuberculosis studied by metabolic labeling and proteome analysis of cellular and extracellular proteins.</title>
        <authorList>
            <person name="Rosenkrands I."/>
            <person name="Slayden R.A."/>
            <person name="Crawford J."/>
            <person name="Aagaard C."/>
            <person name="Barry C.E. III"/>
            <person name="Andersen P."/>
        </authorList>
    </citation>
    <scope>IDENTIFICATION BY MASS SPECTROMETRY</scope>
    <scope>INDUCTION BY HYPOXIA</scope>
    <source>
        <strain>ATCC 25618 / H37Rv</strain>
    </source>
</reference>
<reference key="5">
    <citation type="journal article" date="2002" name="Infect. Immun.">
        <title>IdeR, an essential gene in Mycobacterium tuberculosis: role of IdeR in iron-dependent gene expression, iron metabolism, and oxidative stress response.</title>
        <authorList>
            <person name="Rodriguez G.M."/>
            <person name="Voskuil M.I."/>
            <person name="Gold B."/>
            <person name="Schoolnik G.K."/>
            <person name="Smith I."/>
        </authorList>
    </citation>
    <scope>INDUCED BY IRON</scope>
    <source>
        <strain>ATCC 25618 / H37Rv</strain>
    </source>
</reference>
<reference key="6">
    <citation type="journal article" date="2008" name="Cell Host Microbe">
        <title>Mycobacterium tuberculosis senses host-derived carbon monoxide during macrophage infection.</title>
        <authorList>
            <person name="Shiloh M.U."/>
            <person name="Manzanillo P."/>
            <person name="Cox J.S."/>
        </authorList>
    </citation>
    <scope>REPRESSION BY CARBON MONOXIDE (CO)</scope>
    <source>
        <strain>ATCC 35801 / TMC 107 / Erdman</strain>
    </source>
</reference>
<reference key="7">
    <citation type="journal article" date="2010" name="Acta Crystallogr. F">
        <title>Crystallization and preliminary X-ray crystallographic analysis of a Mycobacterium tuberculosis ferritin homolog, BfrB.</title>
        <authorList>
            <person name="McMath L.M."/>
            <person name="Habel J.E."/>
            <person name="Sankaran B."/>
            <person name="Yu M."/>
            <person name="Hung L.W."/>
            <person name="Goulding C.W."/>
        </authorList>
    </citation>
    <scope>CRYSTALLIZATION</scope>
    <scope>SUBUNIT</scope>
    <source>
        <strain>ATCC 25618 / H37Rv</strain>
    </source>
</reference>
<reference key="8">
    <citation type="journal article" date="2011" name="Mol. Cell. Proteomics">
        <title>Proteogenomic analysis of Mycobacterium tuberculosis by high resolution mass spectrometry.</title>
        <authorList>
            <person name="Kelkar D.S."/>
            <person name="Kumar D."/>
            <person name="Kumar P."/>
            <person name="Balakrishnan L."/>
            <person name="Muthusamy B."/>
            <person name="Yadav A.K."/>
            <person name="Shrivastava P."/>
            <person name="Marimuthu A."/>
            <person name="Anand S."/>
            <person name="Sundaram H."/>
            <person name="Kingsbury R."/>
            <person name="Harsha H.C."/>
            <person name="Nair B."/>
            <person name="Prasad T.S."/>
            <person name="Chauhan D.S."/>
            <person name="Katoch K."/>
            <person name="Katoch V.M."/>
            <person name="Kumar P."/>
            <person name="Chaerkady R."/>
            <person name="Ramachandran S."/>
            <person name="Dash D."/>
            <person name="Pandey A."/>
        </authorList>
    </citation>
    <scope>IDENTIFICATION BY MASS SPECTROMETRY [LARGE SCALE ANALYSIS]</scope>
    <source>
        <strain>ATCC 25618 / H37Rv</strain>
    </source>
</reference>
<reference key="9">
    <citation type="journal article" date="2012" name="J. Bacteriol.">
        <title>Iron storage proteins are essential for the survival and pathogenesis of Mycobacterium tuberculosis in THP-1 macrophages and the guinea pig model of infection.</title>
        <authorList>
            <person name="Reddy P.V."/>
            <person name="Puri R.V."/>
            <person name="Khera A."/>
            <person name="Tyagi A.K."/>
        </authorList>
    </citation>
    <scope>DISRUPTION PHENOTYPE</scope>
    <source>
        <strain>H37Rv</strain>
    </source>
</reference>
<reference key="10">
    <citation type="journal article" date="2014" name="J. Biol. Chem.">
        <title>Characterization of a Mycobacterium tuberculosis nanocompartment and its potential cargo proteins.</title>
        <authorList>
            <person name="Contreras H."/>
            <person name="Joens M.S."/>
            <person name="McMath L.M."/>
            <person name="Le V.P."/>
            <person name="Tullius M.V."/>
            <person name="Kimmey J.M."/>
            <person name="Bionghi N."/>
            <person name="Horwitz M.A."/>
            <person name="Fitzpatrick J.A."/>
            <person name="Goulding C.W."/>
        </authorList>
    </citation>
    <scope>FUNCTION</scope>
    <scope>CATALYTIC ACTIVITY</scope>
    <scope>SUBCELLULAR LOCATION</scope>
    <scope>DOMAIN</scope>
    <scope>MUTAGENESIS OF 167-ALA--LEU-181</scope>
    <source>
        <strain>H37Rv</strain>
    </source>
</reference>
<reference evidence="17" key="11">
    <citation type="journal article" date="2011" name="PLoS ONE">
        <title>Ferritin structure from Mycobacterium tuberculosis: comparative study with homologues identifies extended C-terminus involved in ferroxidase activity.</title>
        <authorList>
            <person name="Khare G."/>
            <person name="Gupta V."/>
            <person name="Nangpal P."/>
            <person name="Gupta R.K."/>
            <person name="Sauter N.K."/>
            <person name="Tyagi A.K."/>
        </authorList>
    </citation>
    <scope>X-RAY CRYSTALLOGRAPHY (3.0 ANGSTROMS)</scope>
    <scope>FUNCTION</scope>
    <scope>CATALYTIC ACTIVITY</scope>
    <scope>SUBUNIT</scope>
    <scope>MUTAGENESIS OF 168-PRO--LEU-181</scope>
    <source>
        <strain>ATCC 25618 / H37Rv</strain>
    </source>
</reference>
<reference evidence="18" key="12">
    <citation type="submission" date="2011-11" db="PDB data bank">
        <title>Mycobacterium tuberculosis ferritin homolog, BfrB.</title>
        <authorList>
            <person name="McMath L.M."/>
            <person name="Contreras H."/>
            <person name="Goulding C.W."/>
        </authorList>
    </citation>
    <scope>X-RAY CRYSTALLOGRAPHY (2.50 ANGSTROMS)</scope>
</reference>
<reference evidence="19" key="13">
    <citation type="journal article" date="2021" name="Acta Crystallogr. D">
        <title>Mycobacterium tuberculosis ferritin: a suitable workhorse protein for cryo-EM development.</title>
        <authorList>
            <person name="Gijsbers A."/>
            <person name="Zhang Y."/>
            <person name="Gao Y."/>
            <person name="Peters P.J."/>
            <person name="Ravelli R.B.G."/>
        </authorList>
    </citation>
    <scope>STRUCTURE BY ELECTRON MICROSCOPY (2.10 ANGSTROMS)</scope>
    <scope>SUBUNIT</scope>
    <scope>BIOTECHNOLOGY</scope>
</reference>
<proteinExistence type="evidence at protein level"/>
<feature type="initiator methionine" description="Removed" evidence="10">
    <location>
        <position position="1"/>
    </location>
</feature>
<feature type="chain" id="PRO_0000392942" description="Bacterioferritin BfrB">
    <location>
        <begin position="2"/>
        <end position="181"/>
    </location>
</feature>
<feature type="domain" description="Ferritin-like diiron" evidence="1">
    <location>
        <begin position="5"/>
        <end position="150"/>
    </location>
</feature>
<feature type="region of interest" description="Targeting peptide" evidence="8">
    <location>
        <begin position="163"/>
        <end position="181"/>
    </location>
</feature>
<feature type="binding site" evidence="1">
    <location>
        <position position="22"/>
    </location>
    <ligand>
        <name>Fe cation</name>
        <dbReference type="ChEBI" id="CHEBI:24875"/>
        <label>1</label>
    </ligand>
</feature>
<feature type="binding site" evidence="1">
    <location>
        <position position="55"/>
    </location>
    <ligand>
        <name>Fe cation</name>
        <dbReference type="ChEBI" id="CHEBI:24875"/>
        <label>1</label>
    </ligand>
</feature>
<feature type="binding site" evidence="1">
    <location>
        <position position="55"/>
    </location>
    <ligand>
        <name>Fe cation</name>
        <dbReference type="ChEBI" id="CHEBI:24875"/>
        <label>2</label>
    </ligand>
</feature>
<feature type="binding site" evidence="1">
    <location>
        <position position="58"/>
    </location>
    <ligand>
        <name>Fe cation</name>
        <dbReference type="ChEBI" id="CHEBI:24875"/>
        <label>1</label>
    </ligand>
</feature>
<feature type="binding site" evidence="1">
    <location>
        <position position="99"/>
    </location>
    <ligand>
        <name>Fe cation</name>
        <dbReference type="ChEBI" id="CHEBI:24875"/>
        <label>2</label>
    </ligand>
</feature>
<feature type="binding site" evidence="1">
    <location>
        <position position="132"/>
    </location>
    <ligand>
        <name>Fe cation</name>
        <dbReference type="ChEBI" id="CHEBI:24875"/>
        <label>2</label>
    </ligand>
</feature>
<feature type="mutagenesis site" description="Protein no longer targeted to encapsulin nanocompartments." evidence="8">
    <location>
        <begin position="167"/>
        <end position="181"/>
    </location>
</feature>
<feature type="mutagenesis site" description="No large change in protein assembly or structure, decreased thermostability, 3.5-fold reduction in oxidation of Fe(2+), 20% reduction in Fe(3+) release rate." evidence="6">
    <location>
        <begin position="168"/>
        <end position="181"/>
    </location>
</feature>
<feature type="helix" evidence="20">
    <location>
        <begin position="10"/>
        <end position="37"/>
    </location>
</feature>
<feature type="turn" evidence="20">
    <location>
        <begin position="38"/>
        <end position="40"/>
    </location>
</feature>
<feature type="helix" evidence="20">
    <location>
        <begin position="42"/>
        <end position="68"/>
    </location>
</feature>
<feature type="helix" evidence="20">
    <location>
        <begin position="88"/>
        <end position="116"/>
    </location>
</feature>
<feature type="helix" evidence="20">
    <location>
        <begin position="119"/>
        <end position="149"/>
    </location>
</feature>
<feature type="helix" evidence="20">
    <location>
        <begin position="153"/>
        <end position="163"/>
    </location>
</feature>
<comment type="function">
    <text evidence="6 8 16">Possible cargo protein of a type 1 encapsulin nanocompartment involved in protection against oxidative stress (Probable). Iron-storage protein that displays ferroxidase activity, catalyzing the oxidation of Fe(2+) ions into Fe(3+) ions, that can then be deposited as a ferric-oxide mineral core within the central cavity of the protein complex (PubMed:21494619, PubMed:24855650). Retains ferroxidase activity inside the encapsulin nanocompartment with a slight decrease in rate. It is not known if this protein is normally found in the encapsulin nanocompartment (PubMed:24855650).</text>
</comment>
<comment type="catalytic activity">
    <reaction evidence="6 8">
        <text>4 Fe(2+) + O2 + 4 H(+) = 4 Fe(3+) + 2 H2O</text>
        <dbReference type="Rhea" id="RHEA:11148"/>
        <dbReference type="ChEBI" id="CHEBI:15377"/>
        <dbReference type="ChEBI" id="CHEBI:15378"/>
        <dbReference type="ChEBI" id="CHEBI:15379"/>
        <dbReference type="ChEBI" id="CHEBI:29033"/>
        <dbReference type="ChEBI" id="CHEBI:29034"/>
        <dbReference type="EC" id="1.16.3.1"/>
    </reaction>
    <physiologicalReaction direction="left-to-right" evidence="8">
        <dbReference type="Rhea" id="RHEA:11149"/>
    </physiologicalReaction>
</comment>
<comment type="subunit">
    <text evidence="6 9 15">Homooligomer of 24 subunits that are packed together to form an approximately spherical molecule 12-13 nm in diameter with a central cavity, in which large amounts of iron can be stored.</text>
</comment>
<comment type="subcellular location">
    <subcellularLocation>
        <location evidence="8">Encapsulin nanocompartment</location>
    </subcellularLocation>
    <text evidence="16">Forms an approximately 12 nm shell inside the encapsulin nanocompartment, suggesting the latter encapsulates the entire 24-subunit homooligomer.</text>
</comment>
<comment type="induction">
    <text evidence="2 3 4 5 10">Induced by 1 mM reactive nitrogen intermediate sodium nitroprusside dihydrate (at protein level). Induced by exposure to 50 uM FeCl(3). A possible member of the dormancy regulon. Induced in response to reduced oxygen tension (hypoxia), repressed by carbon monoxide (CO). It is hoped that this regulon will give insight into the latent, or dormant phase of infection.</text>
</comment>
<comment type="domain">
    <text evidence="8 9">The C-terminus (residues 163-181) targets the protein to the encapsulin nanocompartment (PubMed:24855650). Interestingly the C-terminus is localized iside the ferritin cage, in theory it does not touch the interior of the nanocompartment (PubMed:34342280).</text>
</comment>
<comment type="disruption phenotype">
    <text evidence="7">A single deletion is more sensitive to oxidative stress (cumene hydroperoxide but not plumbagin). A double bfrA-bfrB mutant grows 40% less well in the presence of an iron chelator, is more sensitive to oxidative stress, has significantly reduced pathological effects in guinea pigs and a marked reduction in its survival in human macrophages.</text>
</comment>
<comment type="biotechnology">
    <text evidence="9">As this protein can be easily produced at high concentrations upon expression in E.coli and is highly stable, it is a good model protein for testing new microscopes.</text>
</comment>
<comment type="similarity">
    <text evidence="14">Belongs to the ferritin-like superfamily. Prokaryotic family.</text>
</comment>
<name>BFRB_MYCTU</name>
<protein>
    <recommendedName>
        <fullName evidence="12">Bacterioferritin BfrB</fullName>
        <ecNumber evidence="6 11">1.16.3.1</ecNumber>
    </recommendedName>
    <alternativeName>
        <fullName evidence="13">Non-heme ferritin Ftn</fullName>
    </alternativeName>
    <alternativeName>
        <fullName evidence="13">Nox19</fullName>
    </alternativeName>
</protein>